<dbReference type="EC" id="3.2.2.27" evidence="1"/>
<dbReference type="EMBL" id="CP000261">
    <property type="protein sequence ID" value="ABF35832.1"/>
    <property type="molecule type" value="Genomic_DNA"/>
</dbReference>
<dbReference type="SMR" id="Q1JC76"/>
<dbReference type="KEGG" id="spj:MGAS2096_Spy0780"/>
<dbReference type="HOGENOM" id="CLU_032162_3_1_9"/>
<dbReference type="GO" id="GO:0005737">
    <property type="term" value="C:cytoplasm"/>
    <property type="evidence" value="ECO:0007669"/>
    <property type="project" value="UniProtKB-SubCell"/>
</dbReference>
<dbReference type="GO" id="GO:0004844">
    <property type="term" value="F:uracil DNA N-glycosylase activity"/>
    <property type="evidence" value="ECO:0007669"/>
    <property type="project" value="UniProtKB-UniRule"/>
</dbReference>
<dbReference type="GO" id="GO:0097510">
    <property type="term" value="P:base-excision repair, AP site formation via deaminated base removal"/>
    <property type="evidence" value="ECO:0007669"/>
    <property type="project" value="TreeGrafter"/>
</dbReference>
<dbReference type="CDD" id="cd10027">
    <property type="entry name" value="UDG-F1-like"/>
    <property type="match status" value="1"/>
</dbReference>
<dbReference type="FunFam" id="3.40.470.10:FF:000008">
    <property type="entry name" value="Uracil-DNA glycosylase"/>
    <property type="match status" value="1"/>
</dbReference>
<dbReference type="Gene3D" id="3.40.470.10">
    <property type="entry name" value="Uracil-DNA glycosylase-like domain"/>
    <property type="match status" value="1"/>
</dbReference>
<dbReference type="HAMAP" id="MF_00148">
    <property type="entry name" value="UDG"/>
    <property type="match status" value="1"/>
</dbReference>
<dbReference type="InterPro" id="IPR002043">
    <property type="entry name" value="UDG_fam1"/>
</dbReference>
<dbReference type="InterPro" id="IPR018085">
    <property type="entry name" value="Ura-DNA_Glyclase_AS"/>
</dbReference>
<dbReference type="InterPro" id="IPR005122">
    <property type="entry name" value="Uracil-DNA_glycosylase-like"/>
</dbReference>
<dbReference type="InterPro" id="IPR036895">
    <property type="entry name" value="Uracil-DNA_glycosylase-like_sf"/>
</dbReference>
<dbReference type="NCBIfam" id="NF003588">
    <property type="entry name" value="PRK05254.1-1"/>
    <property type="match status" value="1"/>
</dbReference>
<dbReference type="NCBIfam" id="NF003589">
    <property type="entry name" value="PRK05254.1-2"/>
    <property type="match status" value="1"/>
</dbReference>
<dbReference type="NCBIfam" id="NF003592">
    <property type="entry name" value="PRK05254.1-5"/>
    <property type="match status" value="1"/>
</dbReference>
<dbReference type="NCBIfam" id="TIGR00628">
    <property type="entry name" value="ung"/>
    <property type="match status" value="1"/>
</dbReference>
<dbReference type="PANTHER" id="PTHR11264">
    <property type="entry name" value="URACIL-DNA GLYCOSYLASE"/>
    <property type="match status" value="1"/>
</dbReference>
<dbReference type="PANTHER" id="PTHR11264:SF0">
    <property type="entry name" value="URACIL-DNA GLYCOSYLASE"/>
    <property type="match status" value="1"/>
</dbReference>
<dbReference type="Pfam" id="PF03167">
    <property type="entry name" value="UDG"/>
    <property type="match status" value="1"/>
</dbReference>
<dbReference type="SMART" id="SM00986">
    <property type="entry name" value="UDG"/>
    <property type="match status" value="1"/>
</dbReference>
<dbReference type="SMART" id="SM00987">
    <property type="entry name" value="UreE_C"/>
    <property type="match status" value="1"/>
</dbReference>
<dbReference type="SUPFAM" id="SSF52141">
    <property type="entry name" value="Uracil-DNA glycosylase-like"/>
    <property type="match status" value="1"/>
</dbReference>
<dbReference type="PROSITE" id="PS00130">
    <property type="entry name" value="U_DNA_GLYCOSYLASE"/>
    <property type="match status" value="1"/>
</dbReference>
<name>UNG_STRPB</name>
<comment type="function">
    <text evidence="1">Excises uracil residues from the DNA which can arise as a result of misincorporation of dUMP residues by DNA polymerase or due to deamination of cytosine.</text>
</comment>
<comment type="catalytic activity">
    <reaction evidence="1">
        <text>Hydrolyzes single-stranded DNA or mismatched double-stranded DNA and polynucleotides, releasing free uracil.</text>
        <dbReference type="EC" id="3.2.2.27"/>
    </reaction>
</comment>
<comment type="subcellular location">
    <subcellularLocation>
        <location evidence="1">Cytoplasm</location>
    </subcellularLocation>
</comment>
<comment type="similarity">
    <text evidence="1">Belongs to the uracil-DNA glycosylase (UDG) superfamily. UNG family.</text>
</comment>
<accession>Q1JC76</accession>
<feature type="chain" id="PRO_1000009950" description="Uracil-DNA glycosylase">
    <location>
        <begin position="1"/>
        <end position="217"/>
    </location>
</feature>
<feature type="active site" description="Proton acceptor" evidence="1">
    <location>
        <position position="62"/>
    </location>
</feature>
<organism>
    <name type="scientific">Streptococcus pyogenes serotype M12 (strain MGAS2096)</name>
    <dbReference type="NCBI Taxonomy" id="370553"/>
    <lineage>
        <taxon>Bacteria</taxon>
        <taxon>Bacillati</taxon>
        <taxon>Bacillota</taxon>
        <taxon>Bacilli</taxon>
        <taxon>Lactobacillales</taxon>
        <taxon>Streptococcaceae</taxon>
        <taxon>Streptococcus</taxon>
    </lineage>
</organism>
<reference key="1">
    <citation type="journal article" date="2006" name="Proc. Natl. Acad. Sci. U.S.A.">
        <title>Molecular genetic anatomy of inter- and intraserotype variation in the human bacterial pathogen group A Streptococcus.</title>
        <authorList>
            <person name="Beres S.B."/>
            <person name="Richter E.W."/>
            <person name="Nagiec M.J."/>
            <person name="Sumby P."/>
            <person name="Porcella S.F."/>
            <person name="DeLeo F.R."/>
            <person name="Musser J.M."/>
        </authorList>
    </citation>
    <scope>NUCLEOTIDE SEQUENCE [LARGE SCALE GENOMIC DNA]</scope>
    <source>
        <strain>MGAS2096</strain>
    </source>
</reference>
<protein>
    <recommendedName>
        <fullName evidence="1">Uracil-DNA glycosylase</fullName>
        <shortName evidence="1">UDG</shortName>
        <ecNumber evidence="1">3.2.2.27</ecNumber>
    </recommendedName>
</protein>
<gene>
    <name evidence="1" type="primary">ung</name>
    <name type="ordered locus">MGAS2096_Spy0780</name>
</gene>
<proteinExistence type="inferred from homology"/>
<sequence length="217" mass="24213">MAHSIWHEKIKSFLPEHYYGRINHFLDEAYASGLVYPPRENVFKALQVTPLEETKVLILGQDPYHGPKQAQGLSFSVPEEISAPPSLINILKELADDIGPRDHHDLSTWASQGVLLLNACLTVPAGQANGHAGLIWEPFTDAVIKVLNEKDSPVVFILWGAYARKKKAFITNPKHHIIESPHPSPLSSYRGFFGSKPFSRTNAILEKEGMTGVDWLK</sequence>
<evidence type="ECO:0000255" key="1">
    <source>
        <dbReference type="HAMAP-Rule" id="MF_00148"/>
    </source>
</evidence>
<keyword id="KW-0963">Cytoplasm</keyword>
<keyword id="KW-0227">DNA damage</keyword>
<keyword id="KW-0234">DNA repair</keyword>
<keyword id="KW-0378">Hydrolase</keyword>